<dbReference type="EC" id="1.1.1.-" evidence="5"/>
<dbReference type="EMBL" id="AL123456">
    <property type="protein sequence ID" value="CCP46381.1"/>
    <property type="molecule type" value="Genomic_DNA"/>
</dbReference>
<dbReference type="RefSeq" id="NP_218076.1">
    <property type="nucleotide sequence ID" value="NC_000962.3"/>
</dbReference>
<dbReference type="RefSeq" id="WP_003900097.1">
    <property type="nucleotide sequence ID" value="NZ_NVQJ01000014.1"/>
</dbReference>
<dbReference type="SMR" id="I6YCF0"/>
<dbReference type="FunCoup" id="I6YCF0">
    <property type="interactions" value="181"/>
</dbReference>
<dbReference type="STRING" id="83332.Rv3559c"/>
<dbReference type="PaxDb" id="83332-Rv3559c"/>
<dbReference type="DNASU" id="887897"/>
<dbReference type="GeneID" id="887897"/>
<dbReference type="KEGG" id="mtu:Rv3559c"/>
<dbReference type="KEGG" id="mtv:RVBD_3559c"/>
<dbReference type="PATRIC" id="fig|83332.111.peg.3964"/>
<dbReference type="TubercuList" id="Rv3559c"/>
<dbReference type="eggNOG" id="COG1028">
    <property type="taxonomic scope" value="Bacteria"/>
</dbReference>
<dbReference type="InParanoid" id="I6YCF0"/>
<dbReference type="OrthoDB" id="9803333at2"/>
<dbReference type="PhylomeDB" id="I6YCF0"/>
<dbReference type="BioCyc" id="MetaCyc:G185E-7836-MONOMER"/>
<dbReference type="UniPathway" id="UPA01058"/>
<dbReference type="Proteomes" id="UP000001584">
    <property type="component" value="Chromosome"/>
</dbReference>
<dbReference type="GO" id="GO:0016616">
    <property type="term" value="F:oxidoreductase activity, acting on the CH-OH group of donors, NAD or NADP as acceptor"/>
    <property type="evidence" value="ECO:0000318"/>
    <property type="project" value="GO_Central"/>
</dbReference>
<dbReference type="GO" id="GO:0006707">
    <property type="term" value="P:cholesterol catabolic process"/>
    <property type="evidence" value="ECO:0007669"/>
    <property type="project" value="UniProtKB-UniPathway"/>
</dbReference>
<dbReference type="GO" id="GO:0030497">
    <property type="term" value="P:fatty acid elongation"/>
    <property type="evidence" value="ECO:0000318"/>
    <property type="project" value="GO_Central"/>
</dbReference>
<dbReference type="CDD" id="cd05233">
    <property type="entry name" value="SDR_c"/>
    <property type="match status" value="1"/>
</dbReference>
<dbReference type="FunFam" id="3.40.50.720:FF:000351">
    <property type="entry name" value="Short chain dehydrogenase"/>
    <property type="match status" value="1"/>
</dbReference>
<dbReference type="Gene3D" id="3.40.50.720">
    <property type="entry name" value="NAD(P)-binding Rossmann-like Domain"/>
    <property type="match status" value="1"/>
</dbReference>
<dbReference type="InterPro" id="IPR036291">
    <property type="entry name" value="NAD(P)-bd_dom_sf"/>
</dbReference>
<dbReference type="InterPro" id="IPR002347">
    <property type="entry name" value="SDR_fam"/>
</dbReference>
<dbReference type="NCBIfam" id="NF005880">
    <property type="entry name" value="PRK07831.1"/>
    <property type="match status" value="1"/>
</dbReference>
<dbReference type="PANTHER" id="PTHR42760:SF40">
    <property type="entry name" value="3-OXOACYL-[ACYL-CARRIER-PROTEIN] REDUCTASE, CHLOROPLASTIC"/>
    <property type="match status" value="1"/>
</dbReference>
<dbReference type="PANTHER" id="PTHR42760">
    <property type="entry name" value="SHORT-CHAIN DEHYDROGENASES/REDUCTASES FAMILY MEMBER"/>
    <property type="match status" value="1"/>
</dbReference>
<dbReference type="Pfam" id="PF13561">
    <property type="entry name" value="adh_short_C2"/>
    <property type="match status" value="1"/>
</dbReference>
<dbReference type="PRINTS" id="PR00081">
    <property type="entry name" value="GDHRDH"/>
</dbReference>
<dbReference type="PRINTS" id="PR00080">
    <property type="entry name" value="SDRFAMILY"/>
</dbReference>
<dbReference type="SUPFAM" id="SSF51735">
    <property type="entry name" value="NAD(P)-binding Rossmann-fold domains"/>
    <property type="match status" value="1"/>
</dbReference>
<accession>I6YCF0</accession>
<reference key="1">
    <citation type="journal article" date="1998" name="Nature">
        <title>Deciphering the biology of Mycobacterium tuberculosis from the complete genome sequence.</title>
        <authorList>
            <person name="Cole S.T."/>
            <person name="Brosch R."/>
            <person name="Parkhill J."/>
            <person name="Garnier T."/>
            <person name="Churcher C.M."/>
            <person name="Harris D.E."/>
            <person name="Gordon S.V."/>
            <person name="Eiglmeier K."/>
            <person name="Gas S."/>
            <person name="Barry C.E. III"/>
            <person name="Tekaia F."/>
            <person name="Badcock K."/>
            <person name="Basham D."/>
            <person name="Brown D."/>
            <person name="Chillingworth T."/>
            <person name="Connor R."/>
            <person name="Davies R.M."/>
            <person name="Devlin K."/>
            <person name="Feltwell T."/>
            <person name="Gentles S."/>
            <person name="Hamlin N."/>
            <person name="Holroyd S."/>
            <person name="Hornsby T."/>
            <person name="Jagels K."/>
            <person name="Krogh A."/>
            <person name="McLean J."/>
            <person name="Moule S."/>
            <person name="Murphy L.D."/>
            <person name="Oliver S."/>
            <person name="Osborne J."/>
            <person name="Quail M.A."/>
            <person name="Rajandream M.A."/>
            <person name="Rogers J."/>
            <person name="Rutter S."/>
            <person name="Seeger K."/>
            <person name="Skelton S."/>
            <person name="Squares S."/>
            <person name="Squares R."/>
            <person name="Sulston J.E."/>
            <person name="Taylor K."/>
            <person name="Whitehead S."/>
            <person name="Barrell B.G."/>
        </authorList>
    </citation>
    <scope>NUCLEOTIDE SEQUENCE [LARGE SCALE GENOMIC DNA]</scope>
    <source>
        <strain>ATCC 25618 / H37Rv</strain>
    </source>
</reference>
<reference key="2">
    <citation type="journal article" date="2011" name="Mol. Cell. Proteomics">
        <title>Proteogenomic analysis of Mycobacterium tuberculosis by high resolution mass spectrometry.</title>
        <authorList>
            <person name="Kelkar D.S."/>
            <person name="Kumar D."/>
            <person name="Kumar P."/>
            <person name="Balakrishnan L."/>
            <person name="Muthusamy B."/>
            <person name="Yadav A.K."/>
            <person name="Shrivastava P."/>
            <person name="Marimuthu A."/>
            <person name="Anand S."/>
            <person name="Sundaram H."/>
            <person name="Kingsbury R."/>
            <person name="Harsha H.C."/>
            <person name="Nair B."/>
            <person name="Prasad T.S."/>
            <person name="Chauhan D.S."/>
            <person name="Katoch K."/>
            <person name="Katoch V.M."/>
            <person name="Kumar P."/>
            <person name="Chaerkady R."/>
            <person name="Ramachandran S."/>
            <person name="Dash D."/>
            <person name="Pandey A."/>
        </authorList>
    </citation>
    <scope>IDENTIFICATION BY MASS SPECTROMETRY [LARGE SCALE ANALYSIS]</scope>
    <source>
        <strain>ATCC 25618 / H37Rv</strain>
    </source>
</reference>
<reference key="3">
    <citation type="journal article" date="2017" name="MBio">
        <title>Catabolism of the last two steroid rings in Mycobacterium tuberculosis and other bacteria.</title>
        <authorList>
            <person name="Crowe A.M."/>
            <person name="Casabon I."/>
            <person name="Brown K.L."/>
            <person name="Liu J."/>
            <person name="Lian J."/>
            <person name="Rogalski J.C."/>
            <person name="Hurst T.E."/>
            <person name="Snieckus V."/>
            <person name="Foster L.J."/>
            <person name="Eltis L.D."/>
        </authorList>
    </citation>
    <scope>FUNCTION</scope>
    <scope>CATALYTIC ACTIVITY</scope>
    <scope>ACTIVITY REGULATION</scope>
    <scope>PATHWAY</scope>
    <source>
        <strain>Erdman</strain>
    </source>
</reference>
<proteinExistence type="evidence at protein level"/>
<sequence length="262" mass="27430">MNLSVAPKEIAGHGLLDGKVVVVTAAAGTGIGSATARRALAEGADVVISDHHERRLGETAAELSALGLGRVEHVVCDVTSTAQVDALIDSTTARMGRLDVLVNNAGLGGQTPVADMTDDEWDRVLDVSLTSVFRATRAALRYFRDAPHGGVIVNNASVLGWRAQHSQSHYAAAKAGVMALTRCSAIEAAEYGVRINAVSPSIARHKFLDKTASAELLDRLAAGEAFGRAAEPWEVAATIAFLASDYSSYLTGEVISVSCQHP</sequence>
<keyword id="KW-0153">Cholesterol metabolism</keyword>
<keyword id="KW-0443">Lipid metabolism</keyword>
<keyword id="KW-0520">NAD</keyword>
<keyword id="KW-0560">Oxidoreductase</keyword>
<keyword id="KW-1185">Reference proteome</keyword>
<keyword id="KW-0753">Steroid metabolism</keyword>
<keyword id="KW-1207">Sterol metabolism</keyword>
<organism>
    <name type="scientific">Mycobacterium tuberculosis (strain ATCC 25618 / H37Rv)</name>
    <dbReference type="NCBI Taxonomy" id="83332"/>
    <lineage>
        <taxon>Bacteria</taxon>
        <taxon>Bacillati</taxon>
        <taxon>Actinomycetota</taxon>
        <taxon>Actinomycetes</taxon>
        <taxon>Mycobacteriales</taxon>
        <taxon>Mycobacteriaceae</taxon>
        <taxon>Mycobacterium</taxon>
        <taxon>Mycobacterium tuberculosis complex</taxon>
    </lineage>
</organism>
<gene>
    <name evidence="3" type="primary">ipdF</name>
    <name evidence="6" type="ordered locus">Rv3559c</name>
</gene>
<comment type="function">
    <text evidence="2 5">Involved in the final steps of cholesterol and steroid degradation (PubMed:28377529). Probably catalyzes the oxidation of the 5-OH group of (5R,7aS)-5-hydroxy-7a-methyl-1-oxo-2,3,5,6,7,7a-hexahydro-1H-indene-carboxyl-CoA, leading to the formation of HIEC-CoA (Probable).</text>
</comment>
<comment type="catalytic activity">
    <reaction evidence="5">
        <text>(5R,7aS)-5-hydroxy-7a-methyl-1-oxo-2,3,5,6,7,7a-hexahydro-1H-indene-carboxyl-CoA + NAD(+) = (7aS)-7a-methyl-1,5-dioxo-2,3,5,6,7,7a-hexahydro-1H-indene-carboxyl-CoA + NADH + H(+)</text>
        <dbReference type="Rhea" id="RHEA:66356"/>
        <dbReference type="ChEBI" id="CHEBI:15378"/>
        <dbReference type="ChEBI" id="CHEBI:57540"/>
        <dbReference type="ChEBI" id="CHEBI:57945"/>
        <dbReference type="ChEBI" id="CHEBI:167096"/>
        <dbReference type="ChEBI" id="CHEBI:167100"/>
    </reaction>
    <physiologicalReaction direction="left-to-right" evidence="5">
        <dbReference type="Rhea" id="RHEA:66357"/>
    </physiologicalReaction>
</comment>
<comment type="activity regulation">
    <text evidence="5">Requires the presence of IpdC.</text>
</comment>
<comment type="pathway">
    <text evidence="2">Steroid metabolism; cholesterol degradation.</text>
</comment>
<comment type="similarity">
    <text evidence="4">Belongs to the short-chain dehydrogenases/reductases (SDR) family.</text>
</comment>
<protein>
    <recommendedName>
        <fullName evidence="4">(5R,7aS)-5-hydroxy-7a-methyl-1-oxo-2,3,5,6,7,7a-hexahydro-1H-indene-carboxyl-CoA reductase</fullName>
        <ecNumber evidence="5">1.1.1.-</ecNumber>
    </recommendedName>
</protein>
<feature type="chain" id="PRO_0000452309" description="(5R,7aS)-5-hydroxy-7a-methyl-1-oxo-2,3,5,6,7,7a-hexahydro-1H-indene-carboxyl-CoA reductase">
    <location>
        <begin position="1"/>
        <end position="262"/>
    </location>
</feature>
<feature type="active site" description="Proton acceptor" evidence="1">
    <location>
        <position position="170"/>
    </location>
</feature>
<feature type="binding site" evidence="1">
    <location>
        <position position="50"/>
    </location>
    <ligand>
        <name>NAD(+)</name>
        <dbReference type="ChEBI" id="CHEBI:57540"/>
    </ligand>
</feature>
<feature type="binding site" evidence="1">
    <location>
        <position position="77"/>
    </location>
    <ligand>
        <name>NAD(+)</name>
        <dbReference type="ChEBI" id="CHEBI:57540"/>
    </ligand>
</feature>
<feature type="binding site" evidence="1">
    <location>
        <position position="78"/>
    </location>
    <ligand>
        <name>NAD(+)</name>
        <dbReference type="ChEBI" id="CHEBI:57540"/>
    </ligand>
</feature>
<feature type="binding site" evidence="1">
    <location>
        <position position="104"/>
    </location>
    <ligand>
        <name>NAD(+)</name>
        <dbReference type="ChEBI" id="CHEBI:57540"/>
    </ligand>
</feature>
<feature type="binding site" evidence="1">
    <location>
        <position position="170"/>
    </location>
    <ligand>
        <name>NAD(+)</name>
        <dbReference type="ChEBI" id="CHEBI:57540"/>
    </ligand>
</feature>
<feature type="binding site" evidence="1">
    <location>
        <position position="174"/>
    </location>
    <ligand>
        <name>NAD(+)</name>
        <dbReference type="ChEBI" id="CHEBI:57540"/>
    </ligand>
</feature>
<feature type="binding site" evidence="1">
    <location>
        <position position="203"/>
    </location>
    <ligand>
        <name>NAD(+)</name>
        <dbReference type="ChEBI" id="CHEBI:57540"/>
    </ligand>
</feature>
<name>IPDF_MYCTU</name>
<evidence type="ECO:0000250" key="1">
    <source>
        <dbReference type="UniProtKB" id="P9WGT1"/>
    </source>
</evidence>
<evidence type="ECO:0000269" key="2">
    <source>
    </source>
</evidence>
<evidence type="ECO:0000303" key="3">
    <source>
    </source>
</evidence>
<evidence type="ECO:0000305" key="4"/>
<evidence type="ECO:0000305" key="5">
    <source>
    </source>
</evidence>
<evidence type="ECO:0000312" key="6">
    <source>
        <dbReference type="EMBL" id="CCP46381.1"/>
    </source>
</evidence>